<accession>P36411</accession>
<accession>Q55E70</accession>
<reference key="1">
    <citation type="submission" date="1993-10" db="EMBL/GenBank/DDBJ databases">
        <title>Cloning and characterization of a Rab 7-like GTPase in Dictyostelium discoideum.</title>
        <authorList>
            <person name="Bush J.M. IV"/>
            <person name="Nolta K."/>
            <person name="Rodriguez-Paris J."/>
            <person name="Temesvari L."/>
            <person name="Ruscetti T."/>
            <person name="Steck T."/>
            <person name="Cardelli J.A."/>
        </authorList>
    </citation>
    <scope>NUCLEOTIDE SEQUENCE [MRNA]</scope>
    <source>
        <strain>AX3</strain>
    </source>
</reference>
<reference key="2">
    <citation type="journal article" date="2005" name="Nature">
        <title>The genome of the social amoeba Dictyostelium discoideum.</title>
        <authorList>
            <person name="Eichinger L."/>
            <person name="Pachebat J.A."/>
            <person name="Gloeckner G."/>
            <person name="Rajandream M.A."/>
            <person name="Sucgang R."/>
            <person name="Berriman M."/>
            <person name="Song J."/>
            <person name="Olsen R."/>
            <person name="Szafranski K."/>
            <person name="Xu Q."/>
            <person name="Tunggal B."/>
            <person name="Kummerfeld S."/>
            <person name="Madera M."/>
            <person name="Konfortov B.A."/>
            <person name="Rivero F."/>
            <person name="Bankier A.T."/>
            <person name="Lehmann R."/>
            <person name="Hamlin N."/>
            <person name="Davies R."/>
            <person name="Gaudet P."/>
            <person name="Fey P."/>
            <person name="Pilcher K."/>
            <person name="Chen G."/>
            <person name="Saunders D."/>
            <person name="Sodergren E.J."/>
            <person name="Davis P."/>
            <person name="Kerhornou A."/>
            <person name="Nie X."/>
            <person name="Hall N."/>
            <person name="Anjard C."/>
            <person name="Hemphill L."/>
            <person name="Bason N."/>
            <person name="Farbrother P."/>
            <person name="Desany B."/>
            <person name="Just E."/>
            <person name="Morio T."/>
            <person name="Rost R."/>
            <person name="Churcher C.M."/>
            <person name="Cooper J."/>
            <person name="Haydock S."/>
            <person name="van Driessche N."/>
            <person name="Cronin A."/>
            <person name="Goodhead I."/>
            <person name="Muzny D.M."/>
            <person name="Mourier T."/>
            <person name="Pain A."/>
            <person name="Lu M."/>
            <person name="Harper D."/>
            <person name="Lindsay R."/>
            <person name="Hauser H."/>
            <person name="James K.D."/>
            <person name="Quiles M."/>
            <person name="Madan Babu M."/>
            <person name="Saito T."/>
            <person name="Buchrieser C."/>
            <person name="Wardroper A."/>
            <person name="Felder M."/>
            <person name="Thangavelu M."/>
            <person name="Johnson D."/>
            <person name="Knights A."/>
            <person name="Loulseged H."/>
            <person name="Mungall K.L."/>
            <person name="Oliver K."/>
            <person name="Price C."/>
            <person name="Quail M.A."/>
            <person name="Urushihara H."/>
            <person name="Hernandez J."/>
            <person name="Rabbinowitsch E."/>
            <person name="Steffen D."/>
            <person name="Sanders M."/>
            <person name="Ma J."/>
            <person name="Kohara Y."/>
            <person name="Sharp S."/>
            <person name="Simmonds M.N."/>
            <person name="Spiegler S."/>
            <person name="Tivey A."/>
            <person name="Sugano S."/>
            <person name="White B."/>
            <person name="Walker D."/>
            <person name="Woodward J.R."/>
            <person name="Winckler T."/>
            <person name="Tanaka Y."/>
            <person name="Shaulsky G."/>
            <person name="Schleicher M."/>
            <person name="Weinstock G.M."/>
            <person name="Rosenthal A."/>
            <person name="Cox E.C."/>
            <person name="Chisholm R.L."/>
            <person name="Gibbs R.A."/>
            <person name="Loomis W.F."/>
            <person name="Platzer M."/>
            <person name="Kay R.R."/>
            <person name="Williams J.G."/>
            <person name="Dear P.H."/>
            <person name="Noegel A.A."/>
            <person name="Barrell B.G."/>
            <person name="Kuspa A."/>
        </authorList>
    </citation>
    <scope>NUCLEOTIDE SEQUENCE [LARGE SCALE GENOMIC DNA]</scope>
    <source>
        <strain>AX4</strain>
    </source>
</reference>
<reference key="3">
    <citation type="journal article" date="2006" name="Mol. Cell. Proteomics">
        <title>Proteomics fingerprinting of phagosome maturation and evidence for the role of a Galpha during uptake.</title>
        <authorList>
            <person name="Gotthardt D."/>
            <person name="Blancheteau V."/>
            <person name="Bosserhoff A."/>
            <person name="Ruppert T."/>
            <person name="Delorenzi M."/>
            <person name="Soldati T."/>
        </authorList>
    </citation>
    <scope>IDENTIFICATION BY MASS SPECTROMETRY [LARGE SCALE ANALYSIS]</scope>
    <source>
        <strain>AX2</strain>
    </source>
</reference>
<comment type="function">
    <text evidence="2 3">Small GTPase which cycles between active GTP-bound and inactive GDP-bound states. In its active state, binds to a variety of effector proteins playing a key role in the regulation of endo-lysosomal trafficking. Governs early-to-late endosomal maturation, microtubule minus-end as well as plus-end directed endosomal migration and positioning, and endosome-lysosome transport through different protein-protein interaction cascades (By similarity). Involved in lipophagy, a cytosolic lipase-independent autophagic pathway (By similarity).</text>
</comment>
<comment type="catalytic activity">
    <reaction evidence="2">
        <text>GTP + H2O = GDP + phosphate + H(+)</text>
        <dbReference type="Rhea" id="RHEA:19669"/>
        <dbReference type="ChEBI" id="CHEBI:15377"/>
        <dbReference type="ChEBI" id="CHEBI:15378"/>
        <dbReference type="ChEBI" id="CHEBI:37565"/>
        <dbReference type="ChEBI" id="CHEBI:43474"/>
        <dbReference type="ChEBI" id="CHEBI:58189"/>
        <dbReference type="EC" id="3.6.5.2"/>
    </reaction>
    <physiologicalReaction direction="left-to-right" evidence="2">
        <dbReference type="Rhea" id="RHEA:19670"/>
    </physiologicalReaction>
</comment>
<comment type="subcellular location">
    <subcellularLocation>
        <location evidence="2">Late endosome membrane</location>
        <topology evidence="4">Peripheral membrane protein</topology>
        <orientation evidence="4">Cytoplasmic side</orientation>
    </subcellularLocation>
    <subcellularLocation>
        <location evidence="2">Lysosome membrane</location>
        <topology evidence="4">Peripheral membrane protein</topology>
        <orientation evidence="4">Cytoplasmic side</orientation>
    </subcellularLocation>
    <subcellularLocation>
        <location evidence="2">Cytoplasmic vesicle</location>
        <location evidence="2">Autophagosome membrane</location>
        <topology evidence="4">Peripheral membrane protein</topology>
        <orientation evidence="4">Cytoplasmic side</orientation>
    </subcellularLocation>
    <subcellularLocation>
        <location evidence="3">Lipid droplet</location>
    </subcellularLocation>
    <subcellularLocation>
        <location evidence="3">Cytoplasmic vesicle</location>
    </subcellularLocation>
</comment>
<comment type="similarity">
    <text evidence="4">Belongs to the small GTPase superfamily. Rab family.</text>
</comment>
<gene>
    <name type="primary">rab7A</name>
    <name type="synonym">rab7</name>
    <name type="ORF">DDB_G0269236</name>
</gene>
<proteinExistence type="evidence at protein level"/>
<feature type="chain" id="PRO_0000121273" description="Ras-related protein Rab-7a">
    <location>
        <begin position="1"/>
        <end position="203"/>
    </location>
</feature>
<feature type="short sequence motif" description="Effector region" evidence="1">
    <location>
        <begin position="37"/>
        <end position="45"/>
    </location>
</feature>
<feature type="binding site" evidence="1">
    <location>
        <begin position="15"/>
        <end position="22"/>
    </location>
    <ligand>
        <name>GTP</name>
        <dbReference type="ChEBI" id="CHEBI:37565"/>
    </ligand>
</feature>
<feature type="binding site" evidence="1">
    <location>
        <begin position="34"/>
        <end position="40"/>
    </location>
    <ligand>
        <name>GTP</name>
        <dbReference type="ChEBI" id="CHEBI:37565"/>
    </ligand>
</feature>
<feature type="binding site" evidence="1">
    <location>
        <begin position="63"/>
        <end position="67"/>
    </location>
    <ligand>
        <name>GTP</name>
        <dbReference type="ChEBI" id="CHEBI:37565"/>
    </ligand>
</feature>
<feature type="binding site" evidence="1">
    <location>
        <begin position="125"/>
        <end position="128"/>
    </location>
    <ligand>
        <name>GTP</name>
        <dbReference type="ChEBI" id="CHEBI:37565"/>
    </ligand>
</feature>
<feature type="binding site" evidence="1">
    <location>
        <begin position="157"/>
        <end position="158"/>
    </location>
    <ligand>
        <name>GTP</name>
        <dbReference type="ChEBI" id="CHEBI:37565"/>
    </ligand>
</feature>
<feature type="lipid moiety-binding region" description="S-geranylgeranyl cysteine" evidence="1">
    <location>
        <position position="202"/>
    </location>
</feature>
<feature type="lipid moiety-binding region" description="S-geranylgeranyl cysteine" evidence="1">
    <location>
        <position position="203"/>
    </location>
</feature>
<sequence>MATKKKVLLKVIILGDSGVGKTSLMNQYVNKKFSNQYKATIGADFLTKELMVDDRVVTMQIWDTAGQERFQSLGVAFYRGADCCVLCYDVNVAKTFENLDSWRDEFLIQAGPRDPDNFPFVVLGNKIDLENQRVVSQKRAASWCQSKGNIPYFETSAKEAINVEQAFQTIARNAIKLEDGLVFPIPTNIQVIPEPQPAKSGCC</sequence>
<evidence type="ECO:0000250" key="1"/>
<evidence type="ECO:0000250" key="2">
    <source>
        <dbReference type="UniProtKB" id="P51149"/>
    </source>
</evidence>
<evidence type="ECO:0000250" key="3">
    <source>
        <dbReference type="UniProtKB" id="P51150"/>
    </source>
</evidence>
<evidence type="ECO:0000305" key="4"/>
<protein>
    <recommendedName>
        <fullName>Ras-related protein Rab-7a</fullName>
        <ecNumber evidence="2">3.6.5.2</ecNumber>
    </recommendedName>
</protein>
<keyword id="KW-0072">Autophagy</keyword>
<keyword id="KW-0968">Cytoplasmic vesicle</keyword>
<keyword id="KW-0967">Endosome</keyword>
<keyword id="KW-0342">GTP-binding</keyword>
<keyword id="KW-0378">Hydrolase</keyword>
<keyword id="KW-0442">Lipid degradation</keyword>
<keyword id="KW-0551">Lipid droplet</keyword>
<keyword id="KW-0443">Lipid metabolism</keyword>
<keyword id="KW-0449">Lipoprotein</keyword>
<keyword id="KW-0458">Lysosome</keyword>
<keyword id="KW-0472">Membrane</keyword>
<keyword id="KW-0547">Nucleotide-binding</keyword>
<keyword id="KW-0636">Prenylation</keyword>
<keyword id="KW-1185">Reference proteome</keyword>
<organism>
    <name type="scientific">Dictyostelium discoideum</name>
    <name type="common">Social amoeba</name>
    <dbReference type="NCBI Taxonomy" id="44689"/>
    <lineage>
        <taxon>Eukaryota</taxon>
        <taxon>Amoebozoa</taxon>
        <taxon>Evosea</taxon>
        <taxon>Eumycetozoa</taxon>
        <taxon>Dictyostelia</taxon>
        <taxon>Dictyosteliales</taxon>
        <taxon>Dictyosteliaceae</taxon>
        <taxon>Dictyostelium</taxon>
    </lineage>
</organism>
<dbReference type="EC" id="3.6.5.2" evidence="2"/>
<dbReference type="EMBL" id="U02928">
    <property type="protein sequence ID" value="AAA80152.1"/>
    <property type="molecule type" value="mRNA"/>
</dbReference>
<dbReference type="EMBL" id="AAFI02000005">
    <property type="protein sequence ID" value="EAL71968.1"/>
    <property type="molecule type" value="Genomic_DNA"/>
</dbReference>
<dbReference type="RefSeq" id="XP_645911.1">
    <property type="nucleotide sequence ID" value="XM_640819.2"/>
</dbReference>
<dbReference type="SMR" id="P36411"/>
<dbReference type="FunCoup" id="P36411">
    <property type="interactions" value="858"/>
</dbReference>
<dbReference type="STRING" id="44689.P36411"/>
<dbReference type="PaxDb" id="44689-DDB0191507"/>
<dbReference type="EnsemblProtists" id="EAL71968">
    <property type="protein sequence ID" value="EAL71968"/>
    <property type="gene ID" value="DDB_G0269236"/>
</dbReference>
<dbReference type="GeneID" id="8616852"/>
<dbReference type="KEGG" id="ddi:DDB_G0269236"/>
<dbReference type="dictyBase" id="DDB_G0269236">
    <property type="gene designation" value="rab7A"/>
</dbReference>
<dbReference type="VEuPathDB" id="AmoebaDB:DDB_G0269236"/>
<dbReference type="eggNOG" id="KOG0394">
    <property type="taxonomic scope" value="Eukaryota"/>
</dbReference>
<dbReference type="HOGENOM" id="CLU_041217_10_6_1"/>
<dbReference type="InParanoid" id="P36411"/>
<dbReference type="OMA" id="TSWKDEF"/>
<dbReference type="PhylomeDB" id="P36411"/>
<dbReference type="Reactome" id="R-DDI-6798695">
    <property type="pathway name" value="Neutrophil degranulation"/>
</dbReference>
<dbReference type="Reactome" id="R-DDI-8854214">
    <property type="pathway name" value="TBC/RABGAPs"/>
</dbReference>
<dbReference type="Reactome" id="R-DDI-8873719">
    <property type="pathway name" value="RAB geranylgeranylation"/>
</dbReference>
<dbReference type="Reactome" id="R-DDI-8876198">
    <property type="pathway name" value="RAB GEFs exchange GTP for GDP on RABs"/>
</dbReference>
<dbReference type="Reactome" id="R-DDI-9013149">
    <property type="pathway name" value="RAC1 GTPase cycle"/>
</dbReference>
<dbReference type="Reactome" id="R-DDI-9013404">
    <property type="pathway name" value="RAC2 GTPase cycle"/>
</dbReference>
<dbReference type="Reactome" id="R-DDI-9013406">
    <property type="pathway name" value="RHOQ GTPase cycle"/>
</dbReference>
<dbReference type="Reactome" id="R-DDI-9013407">
    <property type="pathway name" value="RHOH GTPase cycle"/>
</dbReference>
<dbReference type="Reactome" id="R-DDI-9013408">
    <property type="pathway name" value="RHOG GTPase cycle"/>
</dbReference>
<dbReference type="Reactome" id="R-DDI-9013423">
    <property type="pathway name" value="RAC3 GTPase cycle"/>
</dbReference>
<dbReference type="Reactome" id="R-DDI-9706019">
    <property type="pathway name" value="RHOBTB3 ATPase cycle"/>
</dbReference>
<dbReference type="PRO" id="PR:P36411"/>
<dbReference type="Proteomes" id="UP000002195">
    <property type="component" value="Chromosome 1"/>
</dbReference>
<dbReference type="GO" id="GO:0000421">
    <property type="term" value="C:autophagosome membrane"/>
    <property type="evidence" value="ECO:0007669"/>
    <property type="project" value="UniProtKB-SubCell"/>
</dbReference>
<dbReference type="GO" id="GO:0005829">
    <property type="term" value="C:cytosol"/>
    <property type="evidence" value="ECO:0000250"/>
    <property type="project" value="GO_Central"/>
</dbReference>
<dbReference type="GO" id="GO:0032009">
    <property type="term" value="C:early phagosome"/>
    <property type="evidence" value="ECO:0000314"/>
    <property type="project" value="dictyBase"/>
</dbReference>
<dbReference type="GO" id="GO:0036186">
    <property type="term" value="C:early phagosome membrane"/>
    <property type="evidence" value="ECO:0000314"/>
    <property type="project" value="dictyBase"/>
</dbReference>
<dbReference type="GO" id="GO:0030139">
    <property type="term" value="C:endocytic vesicle"/>
    <property type="evidence" value="ECO:0000314"/>
    <property type="project" value="dictyBase"/>
</dbReference>
<dbReference type="GO" id="GO:0005770">
    <property type="term" value="C:late endosome"/>
    <property type="evidence" value="ECO:0000318"/>
    <property type="project" value="GO_Central"/>
</dbReference>
<dbReference type="GO" id="GO:0031902">
    <property type="term" value="C:late endosome membrane"/>
    <property type="evidence" value="ECO:0000250"/>
    <property type="project" value="GO_Central"/>
</dbReference>
<dbReference type="GO" id="GO:0005811">
    <property type="term" value="C:lipid droplet"/>
    <property type="evidence" value="ECO:0007005"/>
    <property type="project" value="dictyBase"/>
</dbReference>
<dbReference type="GO" id="GO:0005765">
    <property type="term" value="C:lysosomal membrane"/>
    <property type="evidence" value="ECO:0000314"/>
    <property type="project" value="dictyBase"/>
</dbReference>
<dbReference type="GO" id="GO:0005764">
    <property type="term" value="C:lysosome"/>
    <property type="evidence" value="ECO:0000314"/>
    <property type="project" value="dictyBase"/>
</dbReference>
<dbReference type="GO" id="GO:0044354">
    <property type="term" value="C:macropinosome"/>
    <property type="evidence" value="ECO:0000314"/>
    <property type="project" value="dictyBase"/>
</dbReference>
<dbReference type="GO" id="GO:0140220">
    <property type="term" value="C:pathogen-containing vacuole"/>
    <property type="evidence" value="ECO:0000314"/>
    <property type="project" value="dictyBase"/>
</dbReference>
<dbReference type="GO" id="GO:0045335">
    <property type="term" value="C:phagocytic vesicle"/>
    <property type="evidence" value="ECO:0007005"/>
    <property type="project" value="dictyBase"/>
</dbReference>
<dbReference type="GO" id="GO:0005886">
    <property type="term" value="C:plasma membrane"/>
    <property type="evidence" value="ECO:0000314"/>
    <property type="project" value="dictyBase"/>
</dbReference>
<dbReference type="GO" id="GO:0032195">
    <property type="term" value="C:post-lysosomal vacuole"/>
    <property type="evidence" value="ECO:0000314"/>
    <property type="project" value="dictyBase"/>
</dbReference>
<dbReference type="GO" id="GO:0003925">
    <property type="term" value="F:G protein activity"/>
    <property type="evidence" value="ECO:0007669"/>
    <property type="project" value="UniProtKB-EC"/>
</dbReference>
<dbReference type="GO" id="GO:0005525">
    <property type="term" value="F:GTP binding"/>
    <property type="evidence" value="ECO:0007669"/>
    <property type="project" value="UniProtKB-KW"/>
</dbReference>
<dbReference type="GO" id="GO:0099638">
    <property type="term" value="P:endosome to plasma membrane protein transport"/>
    <property type="evidence" value="ECO:0000250"/>
    <property type="project" value="UniProtKB"/>
</dbReference>
<dbReference type="GO" id="GO:0006971">
    <property type="term" value="P:hypotonic response"/>
    <property type="evidence" value="ECO:0007007"/>
    <property type="project" value="dictyBase"/>
</dbReference>
<dbReference type="GO" id="GO:0016042">
    <property type="term" value="P:lipid catabolic process"/>
    <property type="evidence" value="ECO:0007669"/>
    <property type="project" value="UniProtKB-KW"/>
</dbReference>
<dbReference type="GO" id="GO:0061724">
    <property type="term" value="P:lipophagy"/>
    <property type="evidence" value="ECO:0000250"/>
    <property type="project" value="GO_Central"/>
</dbReference>
<dbReference type="GO" id="GO:0006909">
    <property type="term" value="P:phagocytosis"/>
    <property type="evidence" value="ECO:0000315"/>
    <property type="project" value="dictyBase"/>
</dbReference>
<dbReference type="GO" id="GO:0090385">
    <property type="term" value="P:phagosome-lysosome fusion"/>
    <property type="evidence" value="ECO:0000318"/>
    <property type="project" value="GO_Central"/>
</dbReference>
<dbReference type="GO" id="GO:1905303">
    <property type="term" value="P:positive regulation of macropinocytosis"/>
    <property type="evidence" value="ECO:0000315"/>
    <property type="project" value="dictyBase"/>
</dbReference>
<dbReference type="GO" id="GO:1905162">
    <property type="term" value="P:regulation of phagosome maturation"/>
    <property type="evidence" value="ECO:0000315"/>
    <property type="project" value="dictyBase"/>
</dbReference>
<dbReference type="GO" id="GO:0060627">
    <property type="term" value="P:regulation of vesicle-mediated transport"/>
    <property type="evidence" value="ECO:0000315"/>
    <property type="project" value="dictyBase"/>
</dbReference>
<dbReference type="CDD" id="cd01862">
    <property type="entry name" value="Rab7"/>
    <property type="match status" value="1"/>
</dbReference>
<dbReference type="FunFam" id="3.40.50.300:FF:000086">
    <property type="entry name" value="Ras-related small GTPase"/>
    <property type="match status" value="1"/>
</dbReference>
<dbReference type="Gene3D" id="3.40.50.300">
    <property type="entry name" value="P-loop containing nucleotide triphosphate hydrolases"/>
    <property type="match status" value="1"/>
</dbReference>
<dbReference type="InterPro" id="IPR027417">
    <property type="entry name" value="P-loop_NTPase"/>
</dbReference>
<dbReference type="InterPro" id="IPR005225">
    <property type="entry name" value="Small_GTP-bd"/>
</dbReference>
<dbReference type="InterPro" id="IPR001806">
    <property type="entry name" value="Small_GTPase"/>
</dbReference>
<dbReference type="NCBIfam" id="TIGR00231">
    <property type="entry name" value="small_GTP"/>
    <property type="match status" value="1"/>
</dbReference>
<dbReference type="PANTHER" id="PTHR47981">
    <property type="entry name" value="RAB FAMILY"/>
    <property type="match status" value="1"/>
</dbReference>
<dbReference type="PANTHER" id="PTHR47981:SF20">
    <property type="entry name" value="RAS-RELATED PROTEIN RAB-7A"/>
    <property type="match status" value="1"/>
</dbReference>
<dbReference type="Pfam" id="PF00071">
    <property type="entry name" value="Ras"/>
    <property type="match status" value="1"/>
</dbReference>
<dbReference type="PRINTS" id="PR00449">
    <property type="entry name" value="RASTRNSFRMNG"/>
</dbReference>
<dbReference type="SMART" id="SM00175">
    <property type="entry name" value="RAB"/>
    <property type="match status" value="1"/>
</dbReference>
<dbReference type="SMART" id="SM00176">
    <property type="entry name" value="RAN"/>
    <property type="match status" value="1"/>
</dbReference>
<dbReference type="SMART" id="SM00173">
    <property type="entry name" value="RAS"/>
    <property type="match status" value="1"/>
</dbReference>
<dbReference type="SMART" id="SM00174">
    <property type="entry name" value="RHO"/>
    <property type="match status" value="1"/>
</dbReference>
<dbReference type="SUPFAM" id="SSF52540">
    <property type="entry name" value="P-loop containing nucleoside triphosphate hydrolases"/>
    <property type="match status" value="1"/>
</dbReference>
<dbReference type="PROSITE" id="PS51419">
    <property type="entry name" value="RAB"/>
    <property type="match status" value="1"/>
</dbReference>
<name>RAB7A_DICDI</name>